<evidence type="ECO:0000255" key="1">
    <source>
        <dbReference type="HAMAP-Rule" id="MF_01805"/>
    </source>
</evidence>
<feature type="chain" id="PRO_0000211117" description="Segregation and condensation protein A">
    <location>
        <begin position="1"/>
        <end position="234"/>
    </location>
</feature>
<organism>
    <name type="scientific">Streptococcus pyogenes serotype M3 (strain ATCC BAA-595 / MGAS315)</name>
    <dbReference type="NCBI Taxonomy" id="198466"/>
    <lineage>
        <taxon>Bacteria</taxon>
        <taxon>Bacillati</taxon>
        <taxon>Bacillota</taxon>
        <taxon>Bacilli</taxon>
        <taxon>Lactobacillales</taxon>
        <taxon>Streptococcaceae</taxon>
        <taxon>Streptococcus</taxon>
    </lineage>
</organism>
<gene>
    <name evidence="1" type="primary">scpA</name>
    <name type="ordered locus">SpyM3_0267</name>
</gene>
<keyword id="KW-0131">Cell cycle</keyword>
<keyword id="KW-0132">Cell division</keyword>
<keyword id="KW-0159">Chromosome partition</keyword>
<keyword id="KW-0963">Cytoplasm</keyword>
<reference key="1">
    <citation type="journal article" date="2002" name="Proc. Natl. Acad. Sci. U.S.A.">
        <title>Genome sequence of a serotype M3 strain of group A Streptococcus: phage-encoded toxins, the high-virulence phenotype, and clone emergence.</title>
        <authorList>
            <person name="Beres S.B."/>
            <person name="Sylva G.L."/>
            <person name="Barbian K.D."/>
            <person name="Lei B."/>
            <person name="Hoff J.S."/>
            <person name="Mammarella N.D."/>
            <person name="Liu M.-Y."/>
            <person name="Smoot J.C."/>
            <person name="Porcella S.F."/>
            <person name="Parkins L.D."/>
            <person name="Campbell D.S."/>
            <person name="Smith T.M."/>
            <person name="McCormick J.K."/>
            <person name="Leung D.Y.M."/>
            <person name="Schlievert P.M."/>
            <person name="Musser J.M."/>
        </authorList>
    </citation>
    <scope>NUCLEOTIDE SEQUENCE [LARGE SCALE GENOMIC DNA]</scope>
    <source>
        <strain>ATCC BAA-595 / MGAS315</strain>
    </source>
</reference>
<accession>P0DF62</accession>
<accession>Q8K8I5</accession>
<comment type="function">
    <text evidence="1">Participates in chromosomal partition during cell division. May act via the formation of a condensin-like complex containing Smc and ScpB that pull DNA away from mid-cell into both cell halves.</text>
</comment>
<comment type="subunit">
    <text evidence="1">Component of a cohesin-like complex composed of ScpA, ScpB and the Smc homodimer, in which ScpA and ScpB bind to the head domain of Smc. The presence of the three proteins is required for the association of the complex with DNA.</text>
</comment>
<comment type="subcellular location">
    <subcellularLocation>
        <location evidence="1">Cytoplasm</location>
    </subcellularLocation>
    <text evidence="1">Associated with two foci at the outer edges of the nucleoid region in young cells, and at four foci within both cell halves in older cells.</text>
</comment>
<comment type="similarity">
    <text evidence="1">Belongs to the ScpA family.</text>
</comment>
<name>SCPA_STRP3</name>
<protein>
    <recommendedName>
        <fullName evidence="1">Segregation and condensation protein A</fullName>
    </recommendedName>
</protein>
<proteinExistence type="inferred from homology"/>
<sequence length="234" mass="27379">MDIKLKDFEGPLDLLLHLVSQYKVDIYEVPIVEVIEQYLNYIETLQVMKLEVAGDYMLMASQLMLIKSRRLLPKVVEHIEEEDLEQDLLEKIEEYSRFKAVSQALAKQHDQRAKWYSKPKQELIFEDAILQEDKTVMDLFLAFSNIMAAKRAVLKNNHTVIERDDYKIEDMMASIKQRLEKENVISLSAIFEECQTLNEVISIFLASLELIKLHVVFVEQLSNFGAIILRKEKK</sequence>
<dbReference type="EMBL" id="AE014074">
    <property type="protein sequence ID" value="AAM78874.1"/>
    <property type="molecule type" value="Genomic_DNA"/>
</dbReference>
<dbReference type="RefSeq" id="WP_002985896.1">
    <property type="nucleotide sequence ID" value="NC_004070.1"/>
</dbReference>
<dbReference type="SMR" id="P0DF62"/>
<dbReference type="KEGG" id="spg:SpyM3_0267"/>
<dbReference type="HOGENOM" id="CLU_038686_3_3_9"/>
<dbReference type="Proteomes" id="UP000000564">
    <property type="component" value="Chromosome"/>
</dbReference>
<dbReference type="GO" id="GO:0005737">
    <property type="term" value="C:cytoplasm"/>
    <property type="evidence" value="ECO:0007669"/>
    <property type="project" value="UniProtKB-SubCell"/>
</dbReference>
<dbReference type="GO" id="GO:0051301">
    <property type="term" value="P:cell division"/>
    <property type="evidence" value="ECO:0007669"/>
    <property type="project" value="UniProtKB-KW"/>
</dbReference>
<dbReference type="GO" id="GO:0007059">
    <property type="term" value="P:chromosome segregation"/>
    <property type="evidence" value="ECO:0007669"/>
    <property type="project" value="UniProtKB-UniRule"/>
</dbReference>
<dbReference type="GO" id="GO:0006260">
    <property type="term" value="P:DNA replication"/>
    <property type="evidence" value="ECO:0007669"/>
    <property type="project" value="UniProtKB-UniRule"/>
</dbReference>
<dbReference type="Gene3D" id="6.10.250.2410">
    <property type="match status" value="1"/>
</dbReference>
<dbReference type="HAMAP" id="MF_01805">
    <property type="entry name" value="ScpA"/>
    <property type="match status" value="1"/>
</dbReference>
<dbReference type="InterPro" id="IPR003768">
    <property type="entry name" value="ScpA"/>
</dbReference>
<dbReference type="NCBIfam" id="NF000993">
    <property type="entry name" value="PRK00104.1-2"/>
    <property type="match status" value="1"/>
</dbReference>
<dbReference type="PANTHER" id="PTHR33969">
    <property type="entry name" value="SEGREGATION AND CONDENSATION PROTEIN A"/>
    <property type="match status" value="1"/>
</dbReference>
<dbReference type="PANTHER" id="PTHR33969:SF2">
    <property type="entry name" value="SEGREGATION AND CONDENSATION PROTEIN A"/>
    <property type="match status" value="1"/>
</dbReference>
<dbReference type="Pfam" id="PF02616">
    <property type="entry name" value="SMC_ScpA"/>
    <property type="match status" value="1"/>
</dbReference>